<organism>
    <name type="scientific">Geobacter sulfurreducens (strain ATCC 51573 / DSM 12127 / PCA)</name>
    <dbReference type="NCBI Taxonomy" id="243231"/>
    <lineage>
        <taxon>Bacteria</taxon>
        <taxon>Pseudomonadati</taxon>
        <taxon>Thermodesulfobacteriota</taxon>
        <taxon>Desulfuromonadia</taxon>
        <taxon>Geobacterales</taxon>
        <taxon>Geobacteraceae</taxon>
        <taxon>Geobacter</taxon>
    </lineage>
</organism>
<keyword id="KW-0560">Oxidoreductase</keyword>
<keyword id="KW-1185">Reference proteome</keyword>
<gene>
    <name evidence="1" type="primary">msrA</name>
    <name type="ordered locus">GSU3161</name>
</gene>
<sequence length="162" mass="18553">MGENTSLEKATFGAGCFWHVEEEFRRVPGVVSTLAGYMGGWKEHPTYEEVCSKTTGHAEVVEVTFDPAAVTYDHLLRVFWDCHDPTQLNRQGPDIGTNYRSVIFYHSPDQERAARASLEHEQRSGRHARPIVTEIVPAATFWWAEEYHQHYLEKRGGGSCRW</sequence>
<feature type="chain" id="PRO_1000087350" description="Peptide methionine sulfoxide reductase MsrA">
    <location>
        <begin position="1"/>
        <end position="162"/>
    </location>
</feature>
<feature type="active site" evidence="1">
    <location>
        <position position="16"/>
    </location>
</feature>
<proteinExistence type="inferred from homology"/>
<name>MSRA_GEOSL</name>
<comment type="function">
    <text evidence="1">Has an important function as a repair enzyme for proteins that have been inactivated by oxidation. Catalyzes the reversible oxidation-reduction of methionine sulfoxide in proteins to methionine.</text>
</comment>
<comment type="catalytic activity">
    <reaction evidence="1">
        <text>L-methionyl-[protein] + [thioredoxin]-disulfide + H2O = L-methionyl-(S)-S-oxide-[protein] + [thioredoxin]-dithiol</text>
        <dbReference type="Rhea" id="RHEA:14217"/>
        <dbReference type="Rhea" id="RHEA-COMP:10698"/>
        <dbReference type="Rhea" id="RHEA-COMP:10700"/>
        <dbReference type="Rhea" id="RHEA-COMP:12313"/>
        <dbReference type="Rhea" id="RHEA-COMP:12315"/>
        <dbReference type="ChEBI" id="CHEBI:15377"/>
        <dbReference type="ChEBI" id="CHEBI:16044"/>
        <dbReference type="ChEBI" id="CHEBI:29950"/>
        <dbReference type="ChEBI" id="CHEBI:44120"/>
        <dbReference type="ChEBI" id="CHEBI:50058"/>
        <dbReference type="EC" id="1.8.4.11"/>
    </reaction>
</comment>
<comment type="catalytic activity">
    <reaction evidence="1">
        <text>[thioredoxin]-disulfide + L-methionine + H2O = L-methionine (S)-S-oxide + [thioredoxin]-dithiol</text>
        <dbReference type="Rhea" id="RHEA:19993"/>
        <dbReference type="Rhea" id="RHEA-COMP:10698"/>
        <dbReference type="Rhea" id="RHEA-COMP:10700"/>
        <dbReference type="ChEBI" id="CHEBI:15377"/>
        <dbReference type="ChEBI" id="CHEBI:29950"/>
        <dbReference type="ChEBI" id="CHEBI:50058"/>
        <dbReference type="ChEBI" id="CHEBI:57844"/>
        <dbReference type="ChEBI" id="CHEBI:58772"/>
        <dbReference type="EC" id="1.8.4.11"/>
    </reaction>
</comment>
<comment type="similarity">
    <text evidence="1">Belongs to the MsrA Met sulfoxide reductase family.</text>
</comment>
<reference key="1">
    <citation type="journal article" date="2003" name="Science">
        <title>Genome of Geobacter sulfurreducens: metal reduction in subsurface environments.</title>
        <authorList>
            <person name="Methe B.A."/>
            <person name="Nelson K.E."/>
            <person name="Eisen J.A."/>
            <person name="Paulsen I.T."/>
            <person name="Nelson W.C."/>
            <person name="Heidelberg J.F."/>
            <person name="Wu D."/>
            <person name="Wu M."/>
            <person name="Ward N.L."/>
            <person name="Beanan M.J."/>
            <person name="Dodson R.J."/>
            <person name="Madupu R."/>
            <person name="Brinkac L.M."/>
            <person name="Daugherty S.C."/>
            <person name="DeBoy R.T."/>
            <person name="Durkin A.S."/>
            <person name="Gwinn M.L."/>
            <person name="Kolonay J.F."/>
            <person name="Sullivan S.A."/>
            <person name="Haft D.H."/>
            <person name="Selengut J."/>
            <person name="Davidsen T.M."/>
            <person name="Zafar N."/>
            <person name="White O."/>
            <person name="Tran B."/>
            <person name="Romero C."/>
            <person name="Forberger H.A."/>
            <person name="Weidman J.F."/>
            <person name="Khouri H.M."/>
            <person name="Feldblyum T.V."/>
            <person name="Utterback T.R."/>
            <person name="Van Aken S.E."/>
            <person name="Lovley D.R."/>
            <person name="Fraser C.M."/>
        </authorList>
    </citation>
    <scope>NUCLEOTIDE SEQUENCE [LARGE SCALE GENOMIC DNA]</scope>
    <source>
        <strain>ATCC 51573 / DSM 12127 / PCA</strain>
    </source>
</reference>
<accession>Q747V4</accession>
<evidence type="ECO:0000255" key="1">
    <source>
        <dbReference type="HAMAP-Rule" id="MF_01401"/>
    </source>
</evidence>
<protein>
    <recommendedName>
        <fullName evidence="1">Peptide methionine sulfoxide reductase MsrA</fullName>
        <shortName evidence="1">Protein-methionine-S-oxide reductase</shortName>
        <ecNumber evidence="1">1.8.4.11</ecNumber>
    </recommendedName>
    <alternativeName>
        <fullName evidence="1">Peptide-methionine (S)-S-oxide reductase</fullName>
        <shortName evidence="1">Peptide Met(O) reductase</shortName>
    </alternativeName>
</protein>
<dbReference type="EC" id="1.8.4.11" evidence="1"/>
<dbReference type="EMBL" id="AE017180">
    <property type="protein sequence ID" value="AAR36552.1"/>
    <property type="molecule type" value="Genomic_DNA"/>
</dbReference>
<dbReference type="RefSeq" id="NP_954202.1">
    <property type="nucleotide sequence ID" value="NC_002939.5"/>
</dbReference>
<dbReference type="RefSeq" id="WP_010943782.1">
    <property type="nucleotide sequence ID" value="NC_002939.5"/>
</dbReference>
<dbReference type="SMR" id="Q747V4"/>
<dbReference type="FunCoup" id="Q747V4">
    <property type="interactions" value="485"/>
</dbReference>
<dbReference type="STRING" id="243231.GSU3161"/>
<dbReference type="EnsemblBacteria" id="AAR36552">
    <property type="protein sequence ID" value="AAR36552"/>
    <property type="gene ID" value="GSU3161"/>
</dbReference>
<dbReference type="KEGG" id="gsu:GSU3161"/>
<dbReference type="PATRIC" id="fig|243231.5.peg.3187"/>
<dbReference type="eggNOG" id="COG0225">
    <property type="taxonomic scope" value="Bacteria"/>
</dbReference>
<dbReference type="HOGENOM" id="CLU_031040_10_0_7"/>
<dbReference type="InParanoid" id="Q747V4"/>
<dbReference type="OrthoDB" id="4174719at2"/>
<dbReference type="Proteomes" id="UP000000577">
    <property type="component" value="Chromosome"/>
</dbReference>
<dbReference type="GO" id="GO:0005737">
    <property type="term" value="C:cytoplasm"/>
    <property type="evidence" value="ECO:0000318"/>
    <property type="project" value="GO_Central"/>
</dbReference>
<dbReference type="GO" id="GO:0036456">
    <property type="term" value="F:L-methionine-(S)-S-oxide reductase activity"/>
    <property type="evidence" value="ECO:0000318"/>
    <property type="project" value="GO_Central"/>
</dbReference>
<dbReference type="GO" id="GO:0008113">
    <property type="term" value="F:peptide-methionine (S)-S-oxide reductase activity"/>
    <property type="evidence" value="ECO:0000318"/>
    <property type="project" value="GO_Central"/>
</dbReference>
<dbReference type="GO" id="GO:0034599">
    <property type="term" value="P:cellular response to oxidative stress"/>
    <property type="evidence" value="ECO:0000318"/>
    <property type="project" value="GO_Central"/>
</dbReference>
<dbReference type="GO" id="GO:0036211">
    <property type="term" value="P:protein modification process"/>
    <property type="evidence" value="ECO:0007669"/>
    <property type="project" value="UniProtKB-UniRule"/>
</dbReference>
<dbReference type="Gene3D" id="3.30.1060.10">
    <property type="entry name" value="Peptide methionine sulphoxide reductase MsrA"/>
    <property type="match status" value="1"/>
</dbReference>
<dbReference type="HAMAP" id="MF_01401">
    <property type="entry name" value="MsrA"/>
    <property type="match status" value="1"/>
</dbReference>
<dbReference type="InterPro" id="IPR002569">
    <property type="entry name" value="Met_Sox_Rdtase_MsrA_dom"/>
</dbReference>
<dbReference type="InterPro" id="IPR036509">
    <property type="entry name" value="Met_Sox_Rdtase_MsrA_sf"/>
</dbReference>
<dbReference type="NCBIfam" id="TIGR00401">
    <property type="entry name" value="msrA"/>
    <property type="match status" value="1"/>
</dbReference>
<dbReference type="PANTHER" id="PTHR43774">
    <property type="entry name" value="PEPTIDE METHIONINE SULFOXIDE REDUCTASE"/>
    <property type="match status" value="1"/>
</dbReference>
<dbReference type="PANTHER" id="PTHR43774:SF1">
    <property type="entry name" value="PEPTIDE METHIONINE SULFOXIDE REDUCTASE MSRA 2"/>
    <property type="match status" value="1"/>
</dbReference>
<dbReference type="Pfam" id="PF01625">
    <property type="entry name" value="PMSR"/>
    <property type="match status" value="1"/>
</dbReference>
<dbReference type="SUPFAM" id="SSF55068">
    <property type="entry name" value="Peptide methionine sulfoxide reductase"/>
    <property type="match status" value="1"/>
</dbReference>